<dbReference type="EC" id="3.1.1.4" evidence="2"/>
<dbReference type="EMBL" id="AY911335">
    <property type="protein sequence ID" value="AAW82103.1"/>
    <property type="molecule type" value="mRNA"/>
</dbReference>
<dbReference type="EMBL" id="BC102063">
    <property type="protein sequence ID" value="AAI02064.1"/>
    <property type="molecule type" value="mRNA"/>
</dbReference>
<dbReference type="RefSeq" id="NP_001020495.1">
    <property type="nucleotide sequence ID" value="NM_001025324.2"/>
</dbReference>
<dbReference type="SMR" id="Q56JZ2"/>
<dbReference type="FunCoup" id="Q56JZ2">
    <property type="interactions" value="229"/>
</dbReference>
<dbReference type="STRING" id="9913.ENSBTAP00000007570"/>
<dbReference type="PaxDb" id="9913-ENSBTAP00000007570"/>
<dbReference type="GeneID" id="507201"/>
<dbReference type="KEGG" id="bta:507201"/>
<dbReference type="VEuPathDB" id="HostDB:ENSBTAG00000005759"/>
<dbReference type="eggNOG" id="KOG4087">
    <property type="taxonomic scope" value="Eukaryota"/>
</dbReference>
<dbReference type="HOGENOM" id="CLU_090683_3_0_1"/>
<dbReference type="InParanoid" id="Q56JZ2"/>
<dbReference type="OMA" id="NTITCED"/>
<dbReference type="OrthoDB" id="5841574at2759"/>
<dbReference type="TreeFam" id="TF319283"/>
<dbReference type="Reactome" id="R-BTA-1482788">
    <property type="pathway name" value="Acyl chain remodelling of PC"/>
</dbReference>
<dbReference type="Reactome" id="R-BTA-1482801">
    <property type="pathway name" value="Acyl chain remodelling of PS"/>
</dbReference>
<dbReference type="Reactome" id="R-BTA-1482839">
    <property type="pathway name" value="Acyl chain remodelling of PE"/>
</dbReference>
<dbReference type="Reactome" id="R-BTA-1482922">
    <property type="pathway name" value="Acyl chain remodelling of PI"/>
</dbReference>
<dbReference type="Reactome" id="R-BTA-1482925">
    <property type="pathway name" value="Acyl chain remodelling of PG"/>
</dbReference>
<dbReference type="Reactome" id="R-BTA-1483166">
    <property type="pathway name" value="Synthesis of PA"/>
</dbReference>
<dbReference type="Reactome" id="R-BTA-6803157">
    <property type="pathway name" value="Antimicrobial peptides"/>
</dbReference>
<dbReference type="Proteomes" id="UP000009136">
    <property type="component" value="Chromosome 2"/>
</dbReference>
<dbReference type="Bgee" id="ENSBTAG00000005759">
    <property type="expression patterns" value="Expressed in nasopharynx and 70 other cell types or tissues"/>
</dbReference>
<dbReference type="GO" id="GO:0005576">
    <property type="term" value="C:extracellular region"/>
    <property type="evidence" value="ECO:0007669"/>
    <property type="project" value="UniProtKB-SubCell"/>
</dbReference>
<dbReference type="GO" id="GO:0005741">
    <property type="term" value="C:mitochondrial outer membrane"/>
    <property type="evidence" value="ECO:0007669"/>
    <property type="project" value="UniProtKB-SubCell"/>
</dbReference>
<dbReference type="GO" id="GO:0005886">
    <property type="term" value="C:plasma membrane"/>
    <property type="evidence" value="ECO:0007669"/>
    <property type="project" value="UniProtKB-SubCell"/>
</dbReference>
<dbReference type="GO" id="GO:0005509">
    <property type="term" value="F:calcium ion binding"/>
    <property type="evidence" value="ECO:0000318"/>
    <property type="project" value="GO_Central"/>
</dbReference>
<dbReference type="GO" id="GO:0047498">
    <property type="term" value="F:calcium-dependent phospholipase A2 activity"/>
    <property type="evidence" value="ECO:0000250"/>
    <property type="project" value="UniProtKB"/>
</dbReference>
<dbReference type="GO" id="GO:0005543">
    <property type="term" value="F:phospholipid binding"/>
    <property type="evidence" value="ECO:0000318"/>
    <property type="project" value="GO_Central"/>
</dbReference>
<dbReference type="GO" id="GO:0050482">
    <property type="term" value="P:arachidonate secretion"/>
    <property type="evidence" value="ECO:0007669"/>
    <property type="project" value="InterPro"/>
</dbReference>
<dbReference type="GO" id="GO:0050830">
    <property type="term" value="P:defense response to Gram-positive bacterium"/>
    <property type="evidence" value="ECO:0000250"/>
    <property type="project" value="UniProtKB"/>
</dbReference>
<dbReference type="GO" id="GO:0006954">
    <property type="term" value="P:inflammatory response"/>
    <property type="evidence" value="ECO:0007669"/>
    <property type="project" value="UniProtKB-KW"/>
</dbReference>
<dbReference type="GO" id="GO:0036335">
    <property type="term" value="P:intestinal stem cell homeostasis"/>
    <property type="evidence" value="ECO:0000250"/>
    <property type="project" value="UniProtKB"/>
</dbReference>
<dbReference type="GO" id="GO:0031640">
    <property type="term" value="P:killing of cells of another organism"/>
    <property type="evidence" value="ECO:0007669"/>
    <property type="project" value="UniProtKB-KW"/>
</dbReference>
<dbReference type="GO" id="GO:0016042">
    <property type="term" value="P:lipid catabolic process"/>
    <property type="evidence" value="ECO:0007669"/>
    <property type="project" value="UniProtKB-KW"/>
</dbReference>
<dbReference type="GO" id="GO:0042130">
    <property type="term" value="P:negative regulation of T cell proliferation"/>
    <property type="evidence" value="ECO:0000318"/>
    <property type="project" value="GO_Central"/>
</dbReference>
<dbReference type="GO" id="GO:0046470">
    <property type="term" value="P:phosphatidylcholine metabolic process"/>
    <property type="evidence" value="ECO:0000250"/>
    <property type="project" value="UniProtKB"/>
</dbReference>
<dbReference type="GO" id="GO:0046337">
    <property type="term" value="P:phosphatidylethanolamine metabolic process"/>
    <property type="evidence" value="ECO:0000250"/>
    <property type="project" value="UniProtKB"/>
</dbReference>
<dbReference type="GO" id="GO:0046471">
    <property type="term" value="P:phosphatidylglycerol metabolic process"/>
    <property type="evidence" value="ECO:0000318"/>
    <property type="project" value="GO_Central"/>
</dbReference>
<dbReference type="GO" id="GO:1902563">
    <property type="term" value="P:regulation of neutrophil activation"/>
    <property type="evidence" value="ECO:0000250"/>
    <property type="project" value="UniProtKB"/>
</dbReference>
<dbReference type="CDD" id="cd00125">
    <property type="entry name" value="PLA2c"/>
    <property type="match status" value="1"/>
</dbReference>
<dbReference type="FunFam" id="1.20.90.10:FF:000001">
    <property type="entry name" value="Basic phospholipase A2 homolog"/>
    <property type="match status" value="1"/>
</dbReference>
<dbReference type="Gene3D" id="1.20.90.10">
    <property type="entry name" value="Phospholipase A2 domain"/>
    <property type="match status" value="1"/>
</dbReference>
<dbReference type="InterPro" id="IPR001211">
    <property type="entry name" value="PLipase_A2"/>
</dbReference>
<dbReference type="InterPro" id="IPR033112">
    <property type="entry name" value="PLipase_A2_Asp_AS"/>
</dbReference>
<dbReference type="InterPro" id="IPR016090">
    <property type="entry name" value="PLipase_A2_dom"/>
</dbReference>
<dbReference type="InterPro" id="IPR036444">
    <property type="entry name" value="PLipase_A2_dom_sf"/>
</dbReference>
<dbReference type="InterPro" id="IPR033113">
    <property type="entry name" value="PLipase_A2_His_AS"/>
</dbReference>
<dbReference type="PANTHER" id="PTHR11716">
    <property type="entry name" value="PHOSPHOLIPASE A2 FAMILY MEMBER"/>
    <property type="match status" value="1"/>
</dbReference>
<dbReference type="PANTHER" id="PTHR11716:SF9">
    <property type="entry name" value="PHOSPHOLIPASE A2, MEMBRANE ASSOCIATED"/>
    <property type="match status" value="1"/>
</dbReference>
<dbReference type="Pfam" id="PF00068">
    <property type="entry name" value="Phospholip_A2_1"/>
    <property type="match status" value="1"/>
</dbReference>
<dbReference type="PRINTS" id="PR00389">
    <property type="entry name" value="PHPHLIPASEA2"/>
</dbReference>
<dbReference type="SMART" id="SM00085">
    <property type="entry name" value="PA2c"/>
    <property type="match status" value="1"/>
</dbReference>
<dbReference type="SUPFAM" id="SSF48619">
    <property type="entry name" value="Phospholipase A2, PLA2"/>
    <property type="match status" value="1"/>
</dbReference>
<dbReference type="PROSITE" id="PS00119">
    <property type="entry name" value="PA2_ASP"/>
    <property type="match status" value="1"/>
</dbReference>
<dbReference type="PROSITE" id="PS00118">
    <property type="entry name" value="PA2_HIS"/>
    <property type="match status" value="1"/>
</dbReference>
<accession>Q56JZ2</accession>
<accession>Q3T193</accession>
<reference key="1">
    <citation type="submission" date="2005-01" db="EMBL/GenBank/DDBJ databases">
        <title>Analysis of sequences obtained from constructed full-length bovine cDNA libraries.</title>
        <authorList>
            <person name="Yu J."/>
            <person name="Meng Y."/>
            <person name="Wang Z."/>
            <person name="Hansen C."/>
            <person name="Li C."/>
            <person name="Moore S.S."/>
        </authorList>
    </citation>
    <scope>NUCLEOTIDE SEQUENCE [LARGE SCALE MRNA]</scope>
    <source>
        <tissue>Lymphoid epithelium</tissue>
    </source>
</reference>
<reference key="2">
    <citation type="submission" date="2005-08" db="EMBL/GenBank/DDBJ databases">
        <authorList>
            <consortium name="NIH - Mammalian Gene Collection (MGC) project"/>
        </authorList>
    </citation>
    <scope>NUCLEOTIDE SEQUENCE [LARGE SCALE MRNA]</scope>
    <source>
        <strain>Crossbred X Angus</strain>
        <tissue>Ileum</tissue>
    </source>
</reference>
<protein>
    <recommendedName>
        <fullName>Phospholipase A2, membrane associated</fullName>
        <ecNumber evidence="2">3.1.1.4</ecNumber>
    </recommendedName>
    <alternativeName>
        <fullName>GIIC sPLA2</fullName>
    </alternativeName>
    <alternativeName>
        <fullName>Group IIA phospholipase A2</fullName>
    </alternativeName>
    <alternativeName>
        <fullName>Phosphatidylcholine 2-acylhydrolase 2A</fullName>
    </alternativeName>
</protein>
<keyword id="KW-0929">Antimicrobial</keyword>
<keyword id="KW-0081">Bacteriolytic enzyme</keyword>
<keyword id="KW-0106">Calcium</keyword>
<keyword id="KW-1003">Cell membrane</keyword>
<keyword id="KW-1015">Disulfide bond</keyword>
<keyword id="KW-0378">Hydrolase</keyword>
<keyword id="KW-0395">Inflammatory response</keyword>
<keyword id="KW-0442">Lipid degradation</keyword>
<keyword id="KW-0443">Lipid metabolism</keyword>
<keyword id="KW-0472">Membrane</keyword>
<keyword id="KW-0479">Metal-binding</keyword>
<keyword id="KW-0496">Mitochondrion</keyword>
<keyword id="KW-1000">Mitochondrion outer membrane</keyword>
<keyword id="KW-1208">Phospholipid metabolism</keyword>
<keyword id="KW-1185">Reference proteome</keyword>
<keyword id="KW-0964">Secreted</keyword>
<keyword id="KW-0732">Signal</keyword>
<feature type="signal peptide" evidence="1">
    <location>
        <begin position="1"/>
        <end position="20"/>
    </location>
</feature>
<feature type="chain" id="PRO_0000239271" description="Phospholipase A2, membrane associated">
    <location>
        <begin position="21"/>
        <end position="144"/>
    </location>
</feature>
<feature type="active site" evidence="1">
    <location>
        <position position="67"/>
    </location>
</feature>
<feature type="active site" evidence="1">
    <location>
        <position position="111"/>
    </location>
</feature>
<feature type="binding site" evidence="1">
    <location>
        <position position="47"/>
    </location>
    <ligand>
        <name>Ca(2+)</name>
        <dbReference type="ChEBI" id="CHEBI:29108"/>
    </ligand>
</feature>
<feature type="binding site" evidence="2">
    <location>
        <position position="49"/>
    </location>
    <ligand>
        <name>Ca(2+)</name>
        <dbReference type="ChEBI" id="CHEBI:29108"/>
    </ligand>
</feature>
<feature type="binding site" evidence="1">
    <location>
        <position position="51"/>
    </location>
    <ligand>
        <name>Ca(2+)</name>
        <dbReference type="ChEBI" id="CHEBI:29108"/>
    </ligand>
</feature>
<feature type="binding site" evidence="2">
    <location>
        <position position="68"/>
    </location>
    <ligand>
        <name>Ca(2+)</name>
        <dbReference type="ChEBI" id="CHEBI:29108"/>
    </ligand>
</feature>
<feature type="disulfide bond" evidence="2">
    <location>
        <begin position="46"/>
        <end position="137"/>
    </location>
</feature>
<feature type="disulfide bond" evidence="2">
    <location>
        <begin position="48"/>
        <end position="64"/>
    </location>
</feature>
<feature type="disulfide bond" evidence="2">
    <location>
        <begin position="63"/>
        <end position="117"/>
    </location>
</feature>
<feature type="disulfide bond" evidence="2">
    <location>
        <begin position="69"/>
        <end position="144"/>
    </location>
</feature>
<feature type="disulfide bond" evidence="2">
    <location>
        <begin position="70"/>
        <end position="110"/>
    </location>
</feature>
<feature type="disulfide bond" evidence="2">
    <location>
        <begin position="79"/>
        <end position="103"/>
    </location>
</feature>
<feature type="disulfide bond" evidence="2">
    <location>
        <begin position="97"/>
        <end position="108"/>
    </location>
</feature>
<feature type="sequence conflict" description="In Ref. 2; AAI02064." evidence="6" ref="2">
    <original>E</original>
    <variation>K</variation>
    <location>
        <position position="75"/>
    </location>
</feature>
<sequence>MKTLLLLAVIMAIGLLQVHGDLLNFRKMIKLTTGKEPATRYSFYGCYCGMSGRGTPKDATDWCCRAHDCCYKNLESRGCRTKFLKYNVTYQEDQIVCEDADDCKSQVCQCDKIAANCFAANLKTYNKKLRFYNKFRCRGAAPAC</sequence>
<evidence type="ECO:0000250" key="1"/>
<evidence type="ECO:0000250" key="2">
    <source>
        <dbReference type="UniProtKB" id="P14555"/>
    </source>
</evidence>
<evidence type="ECO:0000250" key="3">
    <source>
        <dbReference type="UniProtKB" id="P31482"/>
    </source>
</evidence>
<evidence type="ECO:0000255" key="4">
    <source>
        <dbReference type="PROSITE-ProRule" id="PRU10035"/>
    </source>
</evidence>
<evidence type="ECO:0000255" key="5">
    <source>
        <dbReference type="PROSITE-ProRule" id="PRU10036"/>
    </source>
</evidence>
<evidence type="ECO:0000305" key="6"/>
<proteinExistence type="evidence at transcript level"/>
<organism>
    <name type="scientific">Bos taurus</name>
    <name type="common">Bovine</name>
    <dbReference type="NCBI Taxonomy" id="9913"/>
    <lineage>
        <taxon>Eukaryota</taxon>
        <taxon>Metazoa</taxon>
        <taxon>Chordata</taxon>
        <taxon>Craniata</taxon>
        <taxon>Vertebrata</taxon>
        <taxon>Euteleostomi</taxon>
        <taxon>Mammalia</taxon>
        <taxon>Eutheria</taxon>
        <taxon>Laurasiatheria</taxon>
        <taxon>Artiodactyla</taxon>
        <taxon>Ruminantia</taxon>
        <taxon>Pecora</taxon>
        <taxon>Bovidae</taxon>
        <taxon>Bovinae</taxon>
        <taxon>Bos</taxon>
    </lineage>
</organism>
<comment type="function">
    <text evidence="2 3">Secretory calcium-dependent phospholipase A2 that primarily targets extracellular phospholipids with implications in host antimicrobial defense, inflammatory response and tissue regeneration (By similarity). Hydrolyzes the ester bond of the fatty acyl group attached at sn-2 position of phospholipids (phospholipase A2 activity) with preference for phosphatidylethanolamines and phosphatidylglycerols over phosphatidylcholines (By similarity). Contributes to lipid remodeling of cellular membranes and generation of lipid mediators involved in pathogen clearance. Displays bactericidal activity against Gram-positive bacteria by directly hydrolyzing phospholipids of the bacterial membrane. Upon sterile inflammation, targets membrane phospholipids of extracellular mitochondria released from activated platelets, generating free unsaturated fatty acids such as arachidonate that is used by neighboring leukocytes to synthesize inflammatory eicosanoids such as leukotrienes. Simultaneously, by compromising mitochondrial membrane integrity, promotes the release in circulation of potent damage-associated molecular pattern molecules that activate the innate immune response (By similarity). Plays a stem cell regulator role in the intestinal crypt. Within intracellular compartment mediates Paneth cell differentiation and its stem cell supporting functions by inhibiting Wnt signaling pathway in intestinal stem cell (ICS). Secreted in the intestinal lumen upon inflammation, acts in an autocrine way and promotes prostaglandin E2 synthesis that stimulates Wnt signaling pathway in ICS cells and tissue regeneration (By similarity). May play a role in the biosynthesis of N-acyl ethanolamines that regulate energy metabolism and inflammation. Hydrolyzes N-acyl phosphatidylethanolamines to N-acyl lysophosphatidylethanolamines, which are further cleaved by a lysophospholipase D to release N-acyl ethanolamines. Independent of its catalytic activity, acts as a ligand for integrins. Binds to and activates integrins ITGAV:ITGB3, ITGA4:ITGB1 and ITGA5:ITGB1. Binds to a site (site 2) which is distinct from the classical ligand-binding site (site 1) and induces integrin conformational changes and enhanced ligand binding to site 1. Induces cell proliferation in an integrin-dependent manner (By similarity).</text>
</comment>
<comment type="catalytic activity">
    <reaction evidence="2">
        <text>a 1,2-diacyl-sn-glycero-3-phosphoethanolamine + H2O = a 1-acyl-sn-glycero-3-phosphoethanolamine + a fatty acid + H(+)</text>
        <dbReference type="Rhea" id="RHEA:44604"/>
        <dbReference type="ChEBI" id="CHEBI:15377"/>
        <dbReference type="ChEBI" id="CHEBI:15378"/>
        <dbReference type="ChEBI" id="CHEBI:28868"/>
        <dbReference type="ChEBI" id="CHEBI:64381"/>
        <dbReference type="ChEBI" id="CHEBI:64612"/>
    </reaction>
    <physiologicalReaction direction="left-to-right" evidence="2">
        <dbReference type="Rhea" id="RHEA:44605"/>
    </physiologicalReaction>
</comment>
<comment type="catalytic activity">
    <reaction evidence="2">
        <text>1-hexadecanoyl-2-(9Z-octadecenoyl)-sn-glycero-3-phosphoethanolamine + H2O = 1-hexadecanoyl-sn-glycero-3-phosphoethanolamine + (9Z)-octadecenoate + H(+)</text>
        <dbReference type="Rhea" id="RHEA:40911"/>
        <dbReference type="ChEBI" id="CHEBI:15377"/>
        <dbReference type="ChEBI" id="CHEBI:15378"/>
        <dbReference type="ChEBI" id="CHEBI:30823"/>
        <dbReference type="ChEBI" id="CHEBI:73004"/>
        <dbReference type="ChEBI" id="CHEBI:73007"/>
    </reaction>
    <physiologicalReaction direction="left-to-right" evidence="2">
        <dbReference type="Rhea" id="RHEA:40912"/>
    </physiologicalReaction>
</comment>
<comment type="catalytic activity">
    <reaction evidence="2">
        <text>1-hexadecanoyl-2-(9Z,12Z-octadecadienoyl)-sn-glycero-3-phosphoethanolamine + H2O = 1-hexadecanoyl-sn-glycero-3-phosphoethanolamine + (9Z,12Z)-octadecadienoate + H(+)</text>
        <dbReference type="Rhea" id="RHEA:40815"/>
        <dbReference type="ChEBI" id="CHEBI:15377"/>
        <dbReference type="ChEBI" id="CHEBI:15378"/>
        <dbReference type="ChEBI" id="CHEBI:30245"/>
        <dbReference type="ChEBI" id="CHEBI:73004"/>
        <dbReference type="ChEBI" id="CHEBI:73008"/>
    </reaction>
    <physiologicalReaction direction="left-to-right" evidence="2">
        <dbReference type="Rhea" id="RHEA:40816"/>
    </physiologicalReaction>
</comment>
<comment type="catalytic activity">
    <reaction evidence="2">
        <text>1-hexadecanoyl-2-(5Z,8Z,11Z,14Z-eicosatetraenoyl)-sn-glycero-3-phosphoethanolamine + H2O = 1-hexadecanoyl-sn-glycero-3-phosphoethanolamine + (5Z,8Z,11Z,14Z)-eicosatetraenoate + H(+)</text>
        <dbReference type="Rhea" id="RHEA:40431"/>
        <dbReference type="ChEBI" id="CHEBI:15377"/>
        <dbReference type="ChEBI" id="CHEBI:15378"/>
        <dbReference type="ChEBI" id="CHEBI:32395"/>
        <dbReference type="ChEBI" id="CHEBI:73004"/>
        <dbReference type="ChEBI" id="CHEBI:73009"/>
    </reaction>
    <physiologicalReaction direction="left-to-right" evidence="2">
        <dbReference type="Rhea" id="RHEA:40432"/>
    </physiologicalReaction>
</comment>
<comment type="catalytic activity">
    <reaction evidence="2">
        <text>N-hexadecanoyl-1,2-di-(9Z-octadecenoyl)-sn-glycero-3-phosphoethanolamine + H2O = N-hexadecanoyl-1-(9Z-octadecenoyl)-sn-glycero-3-phosphoethanolamine + (9Z)-octadecenoate + H(+)</text>
        <dbReference type="Rhea" id="RHEA:45424"/>
        <dbReference type="ChEBI" id="CHEBI:15377"/>
        <dbReference type="ChEBI" id="CHEBI:15378"/>
        <dbReference type="ChEBI" id="CHEBI:30823"/>
        <dbReference type="ChEBI" id="CHEBI:78097"/>
        <dbReference type="ChEBI" id="CHEBI:85217"/>
    </reaction>
    <physiologicalReaction direction="left-to-right" evidence="2">
        <dbReference type="Rhea" id="RHEA:45425"/>
    </physiologicalReaction>
</comment>
<comment type="catalytic activity">
    <reaction evidence="2">
        <text>1,2-dihexadecanoyl-sn-glycero-3-phospho-(1'-sn-glycerol) + H2O = 1-hexadecanoyl-sn-glycero-3-phospho-(1'-sn-glycerol) + hexadecanoate + H(+)</text>
        <dbReference type="Rhea" id="RHEA:45472"/>
        <dbReference type="ChEBI" id="CHEBI:7896"/>
        <dbReference type="ChEBI" id="CHEBI:15377"/>
        <dbReference type="ChEBI" id="CHEBI:15378"/>
        <dbReference type="ChEBI" id="CHEBI:72829"/>
        <dbReference type="ChEBI" id="CHEBI:75158"/>
    </reaction>
    <physiologicalReaction direction="left-to-right" evidence="2">
        <dbReference type="Rhea" id="RHEA:45473"/>
    </physiologicalReaction>
</comment>
<comment type="catalytic activity">
    <reaction evidence="2">
        <text>1-hexadecanoyl-2-(9Z-octadecenoyl)-sn-glycero-3-phosphoglycerol + H2O = 1-hexadecanoyl-sn-glycero-3-phosphoglycerol + (9Z)-octadecenoate + H(+)</text>
        <dbReference type="Rhea" id="RHEA:44524"/>
        <dbReference type="ChEBI" id="CHEBI:15377"/>
        <dbReference type="ChEBI" id="CHEBI:15378"/>
        <dbReference type="ChEBI" id="CHEBI:30823"/>
        <dbReference type="ChEBI" id="CHEBI:84472"/>
        <dbReference type="ChEBI" id="CHEBI:84475"/>
    </reaction>
    <physiologicalReaction direction="left-to-right" evidence="2">
        <dbReference type="Rhea" id="RHEA:44525"/>
    </physiologicalReaction>
</comment>
<comment type="catalytic activity">
    <reaction evidence="2">
        <text>1-hexadecanoyl-2-(9Z-octadecenoyl)-sn-glycero-3-phospho-(1'-sn-glycerol) + H2O = 1-hexadecanoyl-sn-glycero-3-phospho-(1'-sn-glycerol) + (9Z)-octadecenoate + H(+)</text>
        <dbReference type="Rhea" id="RHEA:40919"/>
        <dbReference type="ChEBI" id="CHEBI:15377"/>
        <dbReference type="ChEBI" id="CHEBI:15378"/>
        <dbReference type="ChEBI" id="CHEBI:30823"/>
        <dbReference type="ChEBI" id="CHEBI:72841"/>
        <dbReference type="ChEBI" id="CHEBI:75158"/>
    </reaction>
    <physiologicalReaction direction="left-to-right" evidence="2">
        <dbReference type="Rhea" id="RHEA:40920"/>
    </physiologicalReaction>
</comment>
<comment type="catalytic activity">
    <reaction evidence="4 5">
        <text>a 1,2-diacyl-sn-glycero-3-phosphocholine + H2O = a 1-acyl-sn-glycero-3-phosphocholine + a fatty acid + H(+)</text>
        <dbReference type="Rhea" id="RHEA:15801"/>
        <dbReference type="ChEBI" id="CHEBI:15377"/>
        <dbReference type="ChEBI" id="CHEBI:15378"/>
        <dbReference type="ChEBI" id="CHEBI:28868"/>
        <dbReference type="ChEBI" id="CHEBI:57643"/>
        <dbReference type="ChEBI" id="CHEBI:58168"/>
        <dbReference type="EC" id="3.1.1.4"/>
    </reaction>
    <physiologicalReaction direction="left-to-right" evidence="2">
        <dbReference type="Rhea" id="RHEA:15802"/>
    </physiologicalReaction>
</comment>
<comment type="catalytic activity">
    <reaction evidence="2">
        <text>1,2-dihexadecanoyl-sn-glycero-3-phosphocholine + H2O = 1-hexadecanoyl-sn-glycero-3-phosphocholine + hexadecanoate + H(+)</text>
        <dbReference type="Rhea" id="RHEA:41223"/>
        <dbReference type="ChEBI" id="CHEBI:7896"/>
        <dbReference type="ChEBI" id="CHEBI:15377"/>
        <dbReference type="ChEBI" id="CHEBI:15378"/>
        <dbReference type="ChEBI" id="CHEBI:72998"/>
        <dbReference type="ChEBI" id="CHEBI:72999"/>
    </reaction>
    <physiologicalReaction direction="left-to-right" evidence="2">
        <dbReference type="Rhea" id="RHEA:41224"/>
    </physiologicalReaction>
</comment>
<comment type="catalytic activity">
    <reaction evidence="2">
        <text>1-hexadecanoyl-2-(9Z-octadecenoyl)-sn-glycero-3-phosphocholine + H2O = 1-hexadecanoyl-sn-glycero-3-phosphocholine + (9Z)-octadecenoate + H(+)</text>
        <dbReference type="Rhea" id="RHEA:38779"/>
        <dbReference type="ChEBI" id="CHEBI:15377"/>
        <dbReference type="ChEBI" id="CHEBI:15378"/>
        <dbReference type="ChEBI" id="CHEBI:30823"/>
        <dbReference type="ChEBI" id="CHEBI:72998"/>
        <dbReference type="ChEBI" id="CHEBI:73001"/>
    </reaction>
    <physiologicalReaction direction="left-to-right" evidence="2">
        <dbReference type="Rhea" id="RHEA:38780"/>
    </physiologicalReaction>
</comment>
<comment type="catalytic activity">
    <reaction evidence="2">
        <text>1-hexadecanoyl-2-(9Z,12Z-octadecadienoyl)-sn-glycero-3-phosphocholine + H2O = (9Z,12Z)-octadecadienoate + 1-hexadecanoyl-sn-glycero-3-phosphocholine + H(+)</text>
        <dbReference type="Rhea" id="RHEA:40811"/>
        <dbReference type="ChEBI" id="CHEBI:15377"/>
        <dbReference type="ChEBI" id="CHEBI:15378"/>
        <dbReference type="ChEBI" id="CHEBI:30245"/>
        <dbReference type="ChEBI" id="CHEBI:72998"/>
        <dbReference type="ChEBI" id="CHEBI:73002"/>
    </reaction>
    <physiologicalReaction direction="left-to-right" evidence="2">
        <dbReference type="Rhea" id="RHEA:40812"/>
    </physiologicalReaction>
</comment>
<comment type="catalytic activity">
    <reaction evidence="2">
        <text>1-hexadecanoyl-2-(4Z,7Z,10Z,13Z,16Z,19Z-docosahexaenoyl)-sn-glycero-3-phosphocholine + H2O = (4Z,7Z,10Z,13Z,16Z,19Z)-docosahexaenoate + 1-hexadecanoyl-sn-glycero-3-phosphocholine + H(+)</text>
        <dbReference type="Rhea" id="RHEA:41231"/>
        <dbReference type="ChEBI" id="CHEBI:15377"/>
        <dbReference type="ChEBI" id="CHEBI:15378"/>
        <dbReference type="ChEBI" id="CHEBI:72998"/>
        <dbReference type="ChEBI" id="CHEBI:74963"/>
        <dbReference type="ChEBI" id="CHEBI:77016"/>
    </reaction>
    <physiologicalReaction direction="left-to-right" evidence="2">
        <dbReference type="Rhea" id="RHEA:41232"/>
    </physiologicalReaction>
</comment>
<comment type="cofactor">
    <cofactor evidence="2">
        <name>Ca(2+)</name>
        <dbReference type="ChEBI" id="CHEBI:29108"/>
    </cofactor>
    <text evidence="2">Binds 1 Ca(2+) ion per subunit.</text>
</comment>
<comment type="subcellular location">
    <subcellularLocation>
        <location evidence="2">Secreted</location>
    </subcellularLocation>
    <subcellularLocation>
        <location evidence="2">Cell membrane</location>
        <topology evidence="2">Peripheral membrane protein</topology>
    </subcellularLocation>
    <subcellularLocation>
        <location evidence="2">Mitochondrion outer membrane</location>
        <topology evidence="2">Peripheral membrane protein</topology>
    </subcellularLocation>
</comment>
<comment type="miscellaneous">
    <text>Group II phospholipase A2 is found in many cells and also extracellularly. The membrane-bound and secreted forms are identical and are encoded by a single gene.</text>
</comment>
<comment type="similarity">
    <text evidence="6">Belongs to the phospholipase A2 family.</text>
</comment>
<name>PA2GA_BOVIN</name>
<gene>
    <name type="primary">PLA2G2A</name>
</gene>